<accession>C0H435</accession>
<name>YOYG_BACSU</name>
<keyword id="KW-0472">Membrane</keyword>
<keyword id="KW-1185">Reference proteome</keyword>
<keyword id="KW-0812">Transmembrane</keyword>
<keyword id="KW-1133">Transmembrane helix</keyword>
<protein>
    <recommendedName>
        <fullName evidence="2">Uncharacterized membrane protein YoyG</fullName>
    </recommendedName>
</protein>
<sequence>MYGYSGYGYGFGCGTNTFVLIVVLFILLIIVGAAFIC</sequence>
<proteinExistence type="inferred from homology"/>
<reference key="1">
    <citation type="journal article" date="1997" name="Nature">
        <title>The complete genome sequence of the Gram-positive bacterium Bacillus subtilis.</title>
        <authorList>
            <person name="Kunst F."/>
            <person name="Ogasawara N."/>
            <person name="Moszer I."/>
            <person name="Albertini A.M."/>
            <person name="Alloni G."/>
            <person name="Azevedo V."/>
            <person name="Bertero M.G."/>
            <person name="Bessieres P."/>
            <person name="Bolotin A."/>
            <person name="Borchert S."/>
            <person name="Borriss R."/>
            <person name="Boursier L."/>
            <person name="Brans A."/>
            <person name="Braun M."/>
            <person name="Brignell S.C."/>
            <person name="Bron S."/>
            <person name="Brouillet S."/>
            <person name="Bruschi C.V."/>
            <person name="Caldwell B."/>
            <person name="Capuano V."/>
            <person name="Carter N.M."/>
            <person name="Choi S.-K."/>
            <person name="Codani J.-J."/>
            <person name="Connerton I.F."/>
            <person name="Cummings N.J."/>
            <person name="Daniel R.A."/>
            <person name="Denizot F."/>
            <person name="Devine K.M."/>
            <person name="Duesterhoeft A."/>
            <person name="Ehrlich S.D."/>
            <person name="Emmerson P.T."/>
            <person name="Entian K.-D."/>
            <person name="Errington J."/>
            <person name="Fabret C."/>
            <person name="Ferrari E."/>
            <person name="Foulger D."/>
            <person name="Fritz C."/>
            <person name="Fujita M."/>
            <person name="Fujita Y."/>
            <person name="Fuma S."/>
            <person name="Galizzi A."/>
            <person name="Galleron N."/>
            <person name="Ghim S.-Y."/>
            <person name="Glaser P."/>
            <person name="Goffeau A."/>
            <person name="Golightly E.J."/>
            <person name="Grandi G."/>
            <person name="Guiseppi G."/>
            <person name="Guy B.J."/>
            <person name="Haga K."/>
            <person name="Haiech J."/>
            <person name="Harwood C.R."/>
            <person name="Henaut A."/>
            <person name="Hilbert H."/>
            <person name="Holsappel S."/>
            <person name="Hosono S."/>
            <person name="Hullo M.-F."/>
            <person name="Itaya M."/>
            <person name="Jones L.-M."/>
            <person name="Joris B."/>
            <person name="Karamata D."/>
            <person name="Kasahara Y."/>
            <person name="Klaerr-Blanchard M."/>
            <person name="Klein C."/>
            <person name="Kobayashi Y."/>
            <person name="Koetter P."/>
            <person name="Koningstein G."/>
            <person name="Krogh S."/>
            <person name="Kumano M."/>
            <person name="Kurita K."/>
            <person name="Lapidus A."/>
            <person name="Lardinois S."/>
            <person name="Lauber J."/>
            <person name="Lazarevic V."/>
            <person name="Lee S.-M."/>
            <person name="Levine A."/>
            <person name="Liu H."/>
            <person name="Masuda S."/>
            <person name="Mauel C."/>
            <person name="Medigue C."/>
            <person name="Medina N."/>
            <person name="Mellado R.P."/>
            <person name="Mizuno M."/>
            <person name="Moestl D."/>
            <person name="Nakai S."/>
            <person name="Noback M."/>
            <person name="Noone D."/>
            <person name="O'Reilly M."/>
            <person name="Ogawa K."/>
            <person name="Ogiwara A."/>
            <person name="Oudega B."/>
            <person name="Park S.-H."/>
            <person name="Parro V."/>
            <person name="Pohl T.M."/>
            <person name="Portetelle D."/>
            <person name="Porwollik S."/>
            <person name="Prescott A.M."/>
            <person name="Presecan E."/>
            <person name="Pujic P."/>
            <person name="Purnelle B."/>
            <person name="Rapoport G."/>
            <person name="Rey M."/>
            <person name="Reynolds S."/>
            <person name="Rieger M."/>
            <person name="Rivolta C."/>
            <person name="Rocha E."/>
            <person name="Roche B."/>
            <person name="Rose M."/>
            <person name="Sadaie Y."/>
            <person name="Sato T."/>
            <person name="Scanlan E."/>
            <person name="Schleich S."/>
            <person name="Schroeter R."/>
            <person name="Scoffone F."/>
            <person name="Sekiguchi J."/>
            <person name="Sekowska A."/>
            <person name="Seror S.J."/>
            <person name="Serror P."/>
            <person name="Shin B.-S."/>
            <person name="Soldo B."/>
            <person name="Sorokin A."/>
            <person name="Tacconi E."/>
            <person name="Takagi T."/>
            <person name="Takahashi H."/>
            <person name="Takemaru K."/>
            <person name="Takeuchi M."/>
            <person name="Tamakoshi A."/>
            <person name="Tanaka T."/>
            <person name="Terpstra P."/>
            <person name="Tognoni A."/>
            <person name="Tosato V."/>
            <person name="Uchiyama S."/>
            <person name="Vandenbol M."/>
            <person name="Vannier F."/>
            <person name="Vassarotti A."/>
            <person name="Viari A."/>
            <person name="Wambutt R."/>
            <person name="Wedler E."/>
            <person name="Wedler H."/>
            <person name="Weitzenegger T."/>
            <person name="Winters P."/>
            <person name="Wipat A."/>
            <person name="Yamamoto H."/>
            <person name="Yamane K."/>
            <person name="Yasumoto K."/>
            <person name="Yata K."/>
            <person name="Yoshida K."/>
            <person name="Yoshikawa H.-F."/>
            <person name="Zumstein E."/>
            <person name="Yoshikawa H."/>
            <person name="Danchin A."/>
        </authorList>
    </citation>
    <scope>NUCLEOTIDE SEQUENCE [LARGE SCALE GENOMIC DNA]</scope>
    <source>
        <strain>168</strain>
    </source>
</reference>
<evidence type="ECO:0000255" key="1"/>
<evidence type="ECO:0000305" key="2"/>
<gene>
    <name type="primary">yoyG</name>
    <name type="ordered locus">BSU19749</name>
</gene>
<organism>
    <name type="scientific">Bacillus subtilis (strain 168)</name>
    <dbReference type="NCBI Taxonomy" id="224308"/>
    <lineage>
        <taxon>Bacteria</taxon>
        <taxon>Bacillati</taxon>
        <taxon>Bacillota</taxon>
        <taxon>Bacilli</taxon>
        <taxon>Bacillales</taxon>
        <taxon>Bacillaceae</taxon>
        <taxon>Bacillus</taxon>
    </lineage>
</organism>
<comment type="subcellular location">
    <subcellularLocation>
        <location evidence="1">Membrane</location>
        <topology evidence="1">Single-pass membrane protein</topology>
    </subcellularLocation>
</comment>
<comment type="similarity">
    <text evidence="2">Belongs to the SscA family.</text>
</comment>
<dbReference type="EMBL" id="AL009126">
    <property type="protein sequence ID" value="CAX52643.1"/>
    <property type="molecule type" value="Genomic_DNA"/>
</dbReference>
<dbReference type="RefSeq" id="WP_003218179.1">
    <property type="nucleotide sequence ID" value="NZ_OZ025638.1"/>
</dbReference>
<dbReference type="RefSeq" id="YP_003097746.1">
    <property type="nucleotide sequence ID" value="NC_000964.3"/>
</dbReference>
<dbReference type="FunCoup" id="C0H435">
    <property type="interactions" value="3"/>
</dbReference>
<dbReference type="EnsemblBacteria" id="CAX52643">
    <property type="protein sequence ID" value="CAX52643"/>
    <property type="gene ID" value="BSU_19749"/>
</dbReference>
<dbReference type="GeneID" id="8302971"/>
<dbReference type="KEGG" id="bsu:BSU19749"/>
<dbReference type="PATRIC" id="fig|224308.179.peg.2163"/>
<dbReference type="InParanoid" id="C0H435"/>
<dbReference type="OrthoDB" id="2940533at2"/>
<dbReference type="BioCyc" id="BSUB:BSU19749-MONOMER"/>
<dbReference type="PRO" id="PR:C0H435"/>
<dbReference type="Proteomes" id="UP000001570">
    <property type="component" value="Chromosome"/>
</dbReference>
<dbReference type="GO" id="GO:0016020">
    <property type="term" value="C:membrane"/>
    <property type="evidence" value="ECO:0007669"/>
    <property type="project" value="UniProtKB-SubCell"/>
</dbReference>
<dbReference type="InterPro" id="IPR010070">
    <property type="entry name" value="YjcZ-like"/>
</dbReference>
<dbReference type="NCBIfam" id="TIGR01732">
    <property type="entry name" value="tiny_TM_bacill"/>
    <property type="match status" value="1"/>
</dbReference>
<dbReference type="Pfam" id="PF09680">
    <property type="entry name" value="YjcZ_2"/>
    <property type="match status" value="1"/>
</dbReference>
<feature type="chain" id="PRO_0000382686" description="Uncharacterized membrane protein YoyG">
    <location>
        <begin position="1"/>
        <end position="37"/>
    </location>
</feature>
<feature type="transmembrane region" description="Helical" evidence="1">
    <location>
        <begin position="17"/>
        <end position="37"/>
    </location>
</feature>